<comment type="similarity">
    <text evidence="5">Belongs to the formin-like family. Class-II subfamily.</text>
</comment>
<comment type="sequence caution" evidence="5">
    <conflict type="erroneous gene model prediction">
        <sequence resource="EMBL-CDS" id="AAG50715"/>
    </conflict>
</comment>
<sequence>MSLLSRFFYKRPPDGLLEFADRVYVFDSCFCTEVLADSLYQIFLHEVINDLHEEFPESSFLAFNFREGEKKSVFAETLCEYDVTVLEYPRQYEGCPMLPLSLIQHFLRVCESWLARGNRQDVILLHCERGGWPLLAFILASFLIFRKVHSGERRTLEIVHREAPKGLLQLLSPLNPFPSQLRYLQYVARRNINSEWPPPERALSLDCVIIRGIPNFDSQHGCRPIIRIFGRNYSSKSGLSTEMVYSMSDKKKPLRHYRQAECDVIKIDIQCWVQGDVVLECVHMDLDPEREVMMFRVMFNTAFIRSNILMLNSDNLDILWEAKDHYPKGFRAEVLFGEVENASPQKVPTPIVNGDETGGLPIEAFSRVQELFSGVDLAENGDDAALWLLKQLAAINDAKEFTRFRHKGSFYFNSPDSEEETNTSSAADSSDEGFEAIQRPRIHIPFDNDDTDDITLSVAHESSEEPHEFSHHHHHEIPAKDSVDNPLNLPSDPPSSGDHVTLLPPPPPPPPPPLFTSTTSFSPSQPPPPPPPPPLFMSTTSFSPSQPPPPPPPPPLFTSTTSFSPSQPPPPPPLPSFSNRDPLTTLHQPINKTPPPPPPPPPPLPSRSIPPPLAQPPPPRPPPPPPPPPSSRSIPSPSAPPPPPPPPPSFGSTGNKRQAQPPPPPPPPPPTRIPAAKCAPPPPPPPPTSHSGSIRVGPPSTPPPPPPPPPKANISNAPKPPAPPPLPPSSTRLGAPPPPPPPPLSKTPAPPPPPLSKTPVPPPPPGLGRGTSSGPPPLGAKGSNAPPPPPPAGRGRASLGLGRGRGVSVPTAAPKKTALKPLHWSKVTRAAKGSLWADTQKQENQPRAPEIDISELESLFSAVSDTTAKKSTGRRGSSISKPEKVQLVDLRRANNCEIMLTKIKIPLPDMLSAVLALDSLALDIDQVENLIKFCPTKEEMELLRNYTGDKEMLGKCEQFFMELMKVPRIEAKLRVFGFKITFASQVEELKSCLNTINAATKEVKESAKLRQIMQTILTLGNALNQGTARGSAVGFKLDSLLKLSDTRARNNKMTLMHYLCKLVGEKMPELLDFANDLVHLEAASKIELKTLAEEMQAATKGLEKVEQELMASENDGAISLGFRKVLKEFLDMADEEVKTLASLYSEVGRNADSLSHYFGEDPARCPFEQVTKILTLFMKTFIKSREENEKQAEAEKKKLEKEAIKEKSATKKDGVDNDNDLIQQIHRHRT</sequence>
<accession>Q9C6S1</accession>
<organism>
    <name type="scientific">Arabidopsis thaliana</name>
    <name type="common">Mouse-ear cress</name>
    <dbReference type="NCBI Taxonomy" id="3702"/>
    <lineage>
        <taxon>Eukaryota</taxon>
        <taxon>Viridiplantae</taxon>
        <taxon>Streptophyta</taxon>
        <taxon>Embryophyta</taxon>
        <taxon>Tracheophyta</taxon>
        <taxon>Spermatophyta</taxon>
        <taxon>Magnoliopsida</taxon>
        <taxon>eudicotyledons</taxon>
        <taxon>Gunneridae</taxon>
        <taxon>Pentapetalae</taxon>
        <taxon>rosids</taxon>
        <taxon>malvids</taxon>
        <taxon>Brassicales</taxon>
        <taxon>Brassicaceae</taxon>
        <taxon>Camelineae</taxon>
        <taxon>Arabidopsis</taxon>
    </lineage>
</organism>
<evidence type="ECO:0000255" key="1">
    <source>
        <dbReference type="PROSITE-ProRule" id="PRU00589"/>
    </source>
</evidence>
<evidence type="ECO:0000255" key="2">
    <source>
        <dbReference type="PROSITE-ProRule" id="PRU00590"/>
    </source>
</evidence>
<evidence type="ECO:0000255" key="3">
    <source>
        <dbReference type="PROSITE-ProRule" id="PRU00774"/>
    </source>
</evidence>
<evidence type="ECO:0000256" key="4">
    <source>
        <dbReference type="SAM" id="MobiDB-lite"/>
    </source>
</evidence>
<evidence type="ECO:0000305" key="5"/>
<feature type="chain" id="PRO_0000308539" description="Formin-like protein 14">
    <location>
        <begin position="1"/>
        <end position="1230"/>
    </location>
</feature>
<feature type="domain" description="Phosphatase tensin-type" evidence="2">
    <location>
        <begin position="1"/>
        <end position="194"/>
    </location>
</feature>
<feature type="domain" description="C2 tensin-type" evidence="1">
    <location>
        <begin position="200"/>
        <end position="339"/>
    </location>
</feature>
<feature type="domain" description="FH2" evidence="3">
    <location>
        <begin position="809"/>
        <end position="1207"/>
    </location>
</feature>
<feature type="region of interest" description="Disordered" evidence="4">
    <location>
        <begin position="412"/>
        <end position="432"/>
    </location>
</feature>
<feature type="region of interest" description="Disordered" evidence="4">
    <location>
        <begin position="460"/>
        <end position="822"/>
    </location>
</feature>
<feature type="region of interest" description="Disordered" evidence="4">
    <location>
        <begin position="1187"/>
        <end position="1230"/>
    </location>
</feature>
<feature type="compositionally biased region" description="Low complexity" evidence="4">
    <location>
        <begin position="484"/>
        <end position="496"/>
    </location>
</feature>
<feature type="compositionally biased region" description="Pro residues" evidence="4">
    <location>
        <begin position="503"/>
        <end position="514"/>
    </location>
</feature>
<feature type="compositionally biased region" description="Pro residues" evidence="4">
    <location>
        <begin position="524"/>
        <end position="535"/>
    </location>
</feature>
<feature type="compositionally biased region" description="Pro residues" evidence="4">
    <location>
        <begin position="545"/>
        <end position="556"/>
    </location>
</feature>
<feature type="compositionally biased region" description="Pro residues" evidence="4">
    <location>
        <begin position="566"/>
        <end position="575"/>
    </location>
</feature>
<feature type="compositionally biased region" description="Polar residues" evidence="4">
    <location>
        <begin position="579"/>
        <end position="591"/>
    </location>
</feature>
<feature type="compositionally biased region" description="Pro residues" evidence="4">
    <location>
        <begin position="592"/>
        <end position="630"/>
    </location>
</feature>
<feature type="compositionally biased region" description="Pro residues" evidence="4">
    <location>
        <begin position="637"/>
        <end position="649"/>
    </location>
</feature>
<feature type="compositionally biased region" description="Pro residues" evidence="4">
    <location>
        <begin position="660"/>
        <end position="672"/>
    </location>
</feature>
<feature type="compositionally biased region" description="Pro residues" evidence="4">
    <location>
        <begin position="679"/>
        <end position="688"/>
    </location>
</feature>
<feature type="compositionally biased region" description="Pro residues" evidence="4">
    <location>
        <begin position="699"/>
        <end position="711"/>
    </location>
</feature>
<feature type="compositionally biased region" description="Pro residues" evidence="4">
    <location>
        <begin position="718"/>
        <end position="728"/>
    </location>
</feature>
<feature type="compositionally biased region" description="Pro residues" evidence="4">
    <location>
        <begin position="735"/>
        <end position="766"/>
    </location>
</feature>
<feature type="compositionally biased region" description="Basic and acidic residues" evidence="4">
    <location>
        <begin position="1187"/>
        <end position="1215"/>
    </location>
</feature>
<feature type="active site" description="Phosphocysteine intermediate" evidence="2">
    <location>
        <position position="127"/>
    </location>
</feature>
<reference key="1">
    <citation type="journal article" date="2000" name="Nature">
        <title>Sequence and analysis of chromosome 1 of the plant Arabidopsis thaliana.</title>
        <authorList>
            <person name="Theologis A."/>
            <person name="Ecker J.R."/>
            <person name="Palm C.J."/>
            <person name="Federspiel N.A."/>
            <person name="Kaul S."/>
            <person name="White O."/>
            <person name="Alonso J."/>
            <person name="Altafi H."/>
            <person name="Araujo R."/>
            <person name="Bowman C.L."/>
            <person name="Brooks S.Y."/>
            <person name="Buehler E."/>
            <person name="Chan A."/>
            <person name="Chao Q."/>
            <person name="Chen H."/>
            <person name="Cheuk R.F."/>
            <person name="Chin C.W."/>
            <person name="Chung M.K."/>
            <person name="Conn L."/>
            <person name="Conway A.B."/>
            <person name="Conway A.R."/>
            <person name="Creasy T.H."/>
            <person name="Dewar K."/>
            <person name="Dunn P."/>
            <person name="Etgu P."/>
            <person name="Feldblyum T.V."/>
            <person name="Feng J.-D."/>
            <person name="Fong B."/>
            <person name="Fujii C.Y."/>
            <person name="Gill J.E."/>
            <person name="Goldsmith A.D."/>
            <person name="Haas B."/>
            <person name="Hansen N.F."/>
            <person name="Hughes B."/>
            <person name="Huizar L."/>
            <person name="Hunter J.L."/>
            <person name="Jenkins J."/>
            <person name="Johnson-Hopson C."/>
            <person name="Khan S."/>
            <person name="Khaykin E."/>
            <person name="Kim C.J."/>
            <person name="Koo H.L."/>
            <person name="Kremenetskaia I."/>
            <person name="Kurtz D.B."/>
            <person name="Kwan A."/>
            <person name="Lam B."/>
            <person name="Langin-Hooper S."/>
            <person name="Lee A."/>
            <person name="Lee J.M."/>
            <person name="Lenz C.A."/>
            <person name="Li J.H."/>
            <person name="Li Y.-P."/>
            <person name="Lin X."/>
            <person name="Liu S.X."/>
            <person name="Liu Z.A."/>
            <person name="Luros J.S."/>
            <person name="Maiti R."/>
            <person name="Marziali A."/>
            <person name="Militscher J."/>
            <person name="Miranda M."/>
            <person name="Nguyen M."/>
            <person name="Nierman W.C."/>
            <person name="Osborne B.I."/>
            <person name="Pai G."/>
            <person name="Peterson J."/>
            <person name="Pham P.K."/>
            <person name="Rizzo M."/>
            <person name="Rooney T."/>
            <person name="Rowley D."/>
            <person name="Sakano H."/>
            <person name="Salzberg S.L."/>
            <person name="Schwartz J.R."/>
            <person name="Shinn P."/>
            <person name="Southwick A.M."/>
            <person name="Sun H."/>
            <person name="Tallon L.J."/>
            <person name="Tambunga G."/>
            <person name="Toriumi M.J."/>
            <person name="Town C.D."/>
            <person name="Utterback T."/>
            <person name="Van Aken S."/>
            <person name="Vaysberg M."/>
            <person name="Vysotskaia V.S."/>
            <person name="Walker M."/>
            <person name="Wu D."/>
            <person name="Yu G."/>
            <person name="Fraser C.M."/>
            <person name="Venter J.C."/>
            <person name="Davis R.W."/>
        </authorList>
    </citation>
    <scope>NUCLEOTIDE SEQUENCE [LARGE SCALE GENOMIC DNA]</scope>
    <source>
        <strain>cv. Columbia</strain>
    </source>
</reference>
<reference key="2">
    <citation type="journal article" date="2017" name="Plant J.">
        <title>Araport11: a complete reannotation of the Arabidopsis thaliana reference genome.</title>
        <authorList>
            <person name="Cheng C.Y."/>
            <person name="Krishnakumar V."/>
            <person name="Chan A.P."/>
            <person name="Thibaud-Nissen F."/>
            <person name="Schobel S."/>
            <person name="Town C.D."/>
        </authorList>
    </citation>
    <scope>GENOME REANNOTATION</scope>
    <source>
        <strain>cv. Columbia</strain>
    </source>
</reference>
<reference key="3">
    <citation type="journal article" date="2002" name="Trends Plant Sci.">
        <title>Formins: intermediates in signal-transduction cascades that affect cytoskeletal reorganization.</title>
        <authorList>
            <person name="Deeks M.J."/>
            <person name="Hussey P.J."/>
            <person name="Davies B."/>
        </authorList>
    </citation>
    <scope>GENE FAMILY ORGANIZATION</scope>
    <scope>NOMENCLATURE</scope>
</reference>
<reference key="4">
    <citation type="journal article" date="2004" name="BMC Genomics">
        <title>Formin homology 2 domains occur in multiple contexts in angiosperms.</title>
        <authorList>
            <person name="Cvrckova F."/>
            <person name="Novotny M."/>
            <person name="Pickova D."/>
            <person name="Zarsky V."/>
        </authorList>
    </citation>
    <scope>GENE FAMILY ORGANIZATION</scope>
    <scope>NOMENCLATURE</scope>
</reference>
<protein>
    <recommendedName>
        <fullName>Formin-like protein 14</fullName>
        <shortName>AtFH14</shortName>
    </recommendedName>
</protein>
<keyword id="KW-0378">Hydrolase</keyword>
<keyword id="KW-0904">Protein phosphatase</keyword>
<keyword id="KW-1185">Reference proteome</keyword>
<gene>
    <name type="primary">FH14</name>
    <name type="ordered locus">At1g31810</name>
    <name type="ORF">F5M6.18</name>
</gene>
<dbReference type="EMBL" id="AC079041">
    <property type="protein sequence ID" value="AAG50715.1"/>
    <property type="status" value="ALT_SEQ"/>
    <property type="molecule type" value="Genomic_DNA"/>
</dbReference>
<dbReference type="EMBL" id="CP002684">
    <property type="protein sequence ID" value="AEE31395.1"/>
    <property type="molecule type" value="Genomic_DNA"/>
</dbReference>
<dbReference type="EMBL" id="CP002684">
    <property type="protein sequence ID" value="ANM58758.1"/>
    <property type="molecule type" value="Genomic_DNA"/>
</dbReference>
<dbReference type="PIR" id="G86441">
    <property type="entry name" value="G86441"/>
</dbReference>
<dbReference type="RefSeq" id="NP_001321171.1">
    <property type="nucleotide sequence ID" value="NM_001332980.1"/>
</dbReference>
<dbReference type="RefSeq" id="NP_174461.3">
    <property type="nucleotide sequence ID" value="NM_102915.4"/>
</dbReference>
<dbReference type="SMR" id="Q9C6S1"/>
<dbReference type="BioGRID" id="25302">
    <property type="interactions" value="1"/>
</dbReference>
<dbReference type="FunCoup" id="Q9C6S1">
    <property type="interactions" value="366"/>
</dbReference>
<dbReference type="IntAct" id="Q9C6S1">
    <property type="interactions" value="2"/>
</dbReference>
<dbReference type="STRING" id="3702.Q9C6S1"/>
<dbReference type="GlyGen" id="Q9C6S1">
    <property type="glycosylation" value="1 site"/>
</dbReference>
<dbReference type="iPTMnet" id="Q9C6S1"/>
<dbReference type="PaxDb" id="3702-AT1G31810.1"/>
<dbReference type="ProteomicsDB" id="230417"/>
<dbReference type="EnsemblPlants" id="AT1G31810.1">
    <property type="protein sequence ID" value="AT1G31810.1"/>
    <property type="gene ID" value="AT1G31810"/>
</dbReference>
<dbReference type="EnsemblPlants" id="AT1G31810.2">
    <property type="protein sequence ID" value="AT1G31810.2"/>
    <property type="gene ID" value="AT1G31810"/>
</dbReference>
<dbReference type="GeneID" id="840068"/>
<dbReference type="Gramene" id="AT1G31810.1">
    <property type="protein sequence ID" value="AT1G31810.1"/>
    <property type="gene ID" value="AT1G31810"/>
</dbReference>
<dbReference type="Gramene" id="AT1G31810.2">
    <property type="protein sequence ID" value="AT1G31810.2"/>
    <property type="gene ID" value="AT1G31810"/>
</dbReference>
<dbReference type="KEGG" id="ath:AT1G31810"/>
<dbReference type="Araport" id="AT1G31810"/>
<dbReference type="TAIR" id="AT1G31810">
    <property type="gene designation" value="AFH14"/>
</dbReference>
<dbReference type="eggNOG" id="KOG1922">
    <property type="taxonomic scope" value="Eukaryota"/>
</dbReference>
<dbReference type="HOGENOM" id="CLU_002558_0_1_1"/>
<dbReference type="InParanoid" id="Q9C6S1"/>
<dbReference type="OMA" id="DQYPRNF"/>
<dbReference type="PRO" id="PR:Q9C6S1"/>
<dbReference type="Proteomes" id="UP000006548">
    <property type="component" value="Chromosome 1"/>
</dbReference>
<dbReference type="ExpressionAtlas" id="Q9C6S1">
    <property type="expression patterns" value="baseline and differential"/>
</dbReference>
<dbReference type="GO" id="GO:0015630">
    <property type="term" value="C:microtubule cytoskeleton"/>
    <property type="evidence" value="ECO:0000314"/>
    <property type="project" value="TAIR"/>
</dbReference>
<dbReference type="GO" id="GO:0009524">
    <property type="term" value="C:phragmoplast"/>
    <property type="evidence" value="ECO:0000314"/>
    <property type="project" value="TAIR"/>
</dbReference>
<dbReference type="GO" id="GO:0009574">
    <property type="term" value="C:preprophase band"/>
    <property type="evidence" value="ECO:0000314"/>
    <property type="project" value="TAIR"/>
</dbReference>
<dbReference type="GO" id="GO:0005819">
    <property type="term" value="C:spindle"/>
    <property type="evidence" value="ECO:0000314"/>
    <property type="project" value="TAIR"/>
</dbReference>
<dbReference type="GO" id="GO:0003779">
    <property type="term" value="F:actin binding"/>
    <property type="evidence" value="ECO:0000250"/>
    <property type="project" value="TAIR"/>
</dbReference>
<dbReference type="GO" id="GO:0051015">
    <property type="term" value="F:actin filament binding"/>
    <property type="evidence" value="ECO:0000314"/>
    <property type="project" value="TAIR"/>
</dbReference>
<dbReference type="GO" id="GO:0008017">
    <property type="term" value="F:microtubule binding"/>
    <property type="evidence" value="ECO:0000314"/>
    <property type="project" value="TAIR"/>
</dbReference>
<dbReference type="GO" id="GO:0004721">
    <property type="term" value="F:phosphoprotein phosphatase activity"/>
    <property type="evidence" value="ECO:0007669"/>
    <property type="project" value="UniProtKB-KW"/>
</dbReference>
<dbReference type="GO" id="GO:0051017">
    <property type="term" value="P:actin filament bundle assembly"/>
    <property type="evidence" value="ECO:0000314"/>
    <property type="project" value="TAIR"/>
</dbReference>
<dbReference type="GO" id="GO:0009556">
    <property type="term" value="P:microsporogenesis"/>
    <property type="evidence" value="ECO:0000315"/>
    <property type="project" value="TAIR"/>
</dbReference>
<dbReference type="FunFam" id="1.20.58.2220:FF:000020">
    <property type="entry name" value="Formin-like protein"/>
    <property type="match status" value="1"/>
</dbReference>
<dbReference type="FunFam" id="3.90.190.10:FF:000165">
    <property type="entry name" value="Formin-like protein"/>
    <property type="match status" value="1"/>
</dbReference>
<dbReference type="Gene3D" id="2.60.40.1110">
    <property type="match status" value="1"/>
</dbReference>
<dbReference type="Gene3D" id="1.20.58.2220">
    <property type="entry name" value="Formin, FH2 domain"/>
    <property type="match status" value="1"/>
</dbReference>
<dbReference type="Gene3D" id="3.90.190.10">
    <property type="entry name" value="Protein tyrosine phosphatase superfamily"/>
    <property type="match status" value="1"/>
</dbReference>
<dbReference type="InterPro" id="IPR035892">
    <property type="entry name" value="C2_domain_sf"/>
</dbReference>
<dbReference type="InterPro" id="IPR015425">
    <property type="entry name" value="FH2_Formin"/>
</dbReference>
<dbReference type="InterPro" id="IPR042201">
    <property type="entry name" value="FH2_Formin_sf"/>
</dbReference>
<dbReference type="InterPro" id="IPR051144">
    <property type="entry name" value="Formin_homology_domain"/>
</dbReference>
<dbReference type="InterPro" id="IPR029021">
    <property type="entry name" value="Prot-tyrosine_phosphatase-like"/>
</dbReference>
<dbReference type="InterPro" id="IPR014020">
    <property type="entry name" value="Tensin_C2-dom"/>
</dbReference>
<dbReference type="PANTHER" id="PTHR45733">
    <property type="entry name" value="FORMIN-J"/>
    <property type="match status" value="1"/>
</dbReference>
<dbReference type="PANTHER" id="PTHR45733:SF17">
    <property type="entry name" value="FORMIN-LIKE PROTEIN 14"/>
    <property type="match status" value="1"/>
</dbReference>
<dbReference type="Pfam" id="PF02181">
    <property type="entry name" value="FH2"/>
    <property type="match status" value="1"/>
</dbReference>
<dbReference type="Pfam" id="PF10409">
    <property type="entry name" value="PTEN_C2"/>
    <property type="match status" value="1"/>
</dbReference>
<dbReference type="SMART" id="SM00498">
    <property type="entry name" value="FH2"/>
    <property type="match status" value="1"/>
</dbReference>
<dbReference type="SMART" id="SM01326">
    <property type="entry name" value="PTEN_C2"/>
    <property type="match status" value="1"/>
</dbReference>
<dbReference type="SUPFAM" id="SSF52799">
    <property type="entry name" value="(Phosphotyrosine protein) phosphatases II"/>
    <property type="match status" value="1"/>
</dbReference>
<dbReference type="SUPFAM" id="SSF49562">
    <property type="entry name" value="C2 domain (Calcium/lipid-binding domain, CaLB)"/>
    <property type="match status" value="1"/>
</dbReference>
<dbReference type="SUPFAM" id="SSF101447">
    <property type="entry name" value="Formin homology 2 domain (FH2 domain)"/>
    <property type="match status" value="1"/>
</dbReference>
<dbReference type="PROSITE" id="PS51182">
    <property type="entry name" value="C2_TENSIN"/>
    <property type="match status" value="1"/>
</dbReference>
<dbReference type="PROSITE" id="PS51444">
    <property type="entry name" value="FH2"/>
    <property type="match status" value="1"/>
</dbReference>
<dbReference type="PROSITE" id="PS51181">
    <property type="entry name" value="PPASE_TENSIN"/>
    <property type="match status" value="1"/>
</dbReference>
<name>FH14_ARATH</name>
<proteinExistence type="inferred from homology"/>